<sequence length="325" mass="35569">MFLQSRVSRLLAQLRAAGQLLGAPRPWPGPSPGATRTRSSACGPPASLSAHHPRARTSAGVGAWGAAAVGRRAGVRTWAPLAMAAKVDLSTSTDWKEAKSFLKGLSDKQREEHYFCRDFVRLKKIPTWKETAKGVTVKVEEPKYKKDKQLNEKISLFRGDITKLEVDAIVNAANSSLLGGGGVDGCIHRAAGPLLTDECRTLQNCETGKAKITCGYRLPAKYVIHTVGPIAHGEPSASQAAELRSCYLSSLDLLLEHRLRSAAFPCISTGVFGYPNEAAAEVVLTALREWLEQHKDKVDRLIICVFLEKDENIYRERLPHYFPVA</sequence>
<reference key="1">
    <citation type="submission" date="2006-01" db="EMBL/GenBank/DDBJ databases">
        <authorList>
            <consortium name="NIH - Mammalian Gene Collection (MGC) project"/>
        </authorList>
    </citation>
    <scope>NUCLEOTIDE SEQUENCE [LARGE SCALE MRNA]</scope>
    <source>
        <strain>Hereford</strain>
        <tissue>Heart ventricle</tissue>
    </source>
</reference>
<evidence type="ECO:0000250" key="1">
    <source>
        <dbReference type="UniProtKB" id="A1Z1Q3"/>
    </source>
</evidence>
<evidence type="ECO:0000250" key="2">
    <source>
        <dbReference type="UniProtKB" id="Q922B1"/>
    </source>
</evidence>
<evidence type="ECO:0000250" key="3">
    <source>
        <dbReference type="UniProtKB" id="Q9BQ69"/>
    </source>
</evidence>
<evidence type="ECO:0000255" key="4">
    <source>
        <dbReference type="PROSITE-ProRule" id="PRU00490"/>
    </source>
</evidence>
<evidence type="ECO:0000256" key="5">
    <source>
        <dbReference type="SAM" id="MobiDB-lite"/>
    </source>
</evidence>
<evidence type="ECO:0000305" key="6"/>
<name>MACD1_BOVIN</name>
<comment type="function">
    <text evidence="3">Removes ADP-ribose from aspartate and glutamate residues in proteins bearing a single ADP-ribose moiety. Inactive towards proteins bearing poly-ADP-ribose. Deacetylates O-acetyl-ADP ribose, a signaling molecule generated by the deacetylation of acetylated lysine residues in histones and other proteins. Plays a role in estrogen signaling. Binds to androgen receptor (AR) and amplifies the transactivation function of AR in response to androgen. May play an important role in carcinogenesis and/or progression of hormone-dependent cancers by feed-forward mechanism that activates ESR1 transactivation. Could be an ESR1 coactivator, providing a positive feedback regulatory loop for ESR1 signal transduction. Could be involved in invasive growth by down-regulating CDH1 in endometrial cancer cells. Enhances ESR1-mediated transcription activity.</text>
</comment>
<comment type="catalytic activity">
    <reaction evidence="3">
        <text>3''-O-acetyl-ADP-D-ribose + H2O = ADP-D-ribose + acetate + H(+)</text>
        <dbReference type="Rhea" id="RHEA:59244"/>
        <dbReference type="ChEBI" id="CHEBI:15377"/>
        <dbReference type="ChEBI" id="CHEBI:15378"/>
        <dbReference type="ChEBI" id="CHEBI:30089"/>
        <dbReference type="ChEBI" id="CHEBI:57967"/>
        <dbReference type="ChEBI" id="CHEBI:142723"/>
        <dbReference type="EC" id="3.1.1.106"/>
    </reaction>
</comment>
<comment type="catalytic activity">
    <reaction evidence="3">
        <text>2''-O-acetyl-ADP-D-ribose + H2O = ADP-D-ribose + acetate + H(+)</text>
        <dbReference type="Rhea" id="RHEA:57060"/>
        <dbReference type="ChEBI" id="CHEBI:15377"/>
        <dbReference type="ChEBI" id="CHEBI:15378"/>
        <dbReference type="ChEBI" id="CHEBI:30089"/>
        <dbReference type="ChEBI" id="CHEBI:57967"/>
        <dbReference type="ChEBI" id="CHEBI:83767"/>
        <dbReference type="EC" id="3.1.1.106"/>
    </reaction>
</comment>
<comment type="catalytic activity">
    <reaction evidence="3">
        <text>4-O-(ADP-D-ribosyl)-L-aspartyl-[protein] + H2O = L-aspartyl-[protein] + ADP-D-ribose + H(+)</text>
        <dbReference type="Rhea" id="RHEA:54428"/>
        <dbReference type="Rhea" id="RHEA-COMP:9867"/>
        <dbReference type="Rhea" id="RHEA-COMP:13832"/>
        <dbReference type="ChEBI" id="CHEBI:15377"/>
        <dbReference type="ChEBI" id="CHEBI:15378"/>
        <dbReference type="ChEBI" id="CHEBI:29961"/>
        <dbReference type="ChEBI" id="CHEBI:57967"/>
        <dbReference type="ChEBI" id="CHEBI:138102"/>
    </reaction>
</comment>
<comment type="catalytic activity">
    <reaction evidence="3">
        <text>5-O-(ADP-D-ribosyl)-L-glutamyl-[protein] + H2O = L-glutamyl-[protein] + ADP-D-ribose + H(+)</text>
        <dbReference type="Rhea" id="RHEA:58248"/>
        <dbReference type="Rhea" id="RHEA-COMP:10208"/>
        <dbReference type="Rhea" id="RHEA-COMP:15089"/>
        <dbReference type="ChEBI" id="CHEBI:15377"/>
        <dbReference type="ChEBI" id="CHEBI:15378"/>
        <dbReference type="ChEBI" id="CHEBI:29973"/>
        <dbReference type="ChEBI" id="CHEBI:57967"/>
        <dbReference type="ChEBI" id="CHEBI:142540"/>
    </reaction>
</comment>
<comment type="catalytic activity">
    <reaction evidence="3">
        <text>alpha-NAD(+) + H2O = ADP-D-ribose + nicotinamide + H(+)</text>
        <dbReference type="Rhea" id="RHEA:68792"/>
        <dbReference type="ChEBI" id="CHEBI:15377"/>
        <dbReference type="ChEBI" id="CHEBI:15378"/>
        <dbReference type="ChEBI" id="CHEBI:17154"/>
        <dbReference type="ChEBI" id="CHEBI:57967"/>
        <dbReference type="ChEBI" id="CHEBI:77017"/>
    </reaction>
</comment>
<comment type="activity regulation">
    <text evidence="3">Subject to competitive inhibition by the product ADP-ribose.</text>
</comment>
<comment type="subunit">
    <text evidence="3">Interacts with ESR1; Interacts in a manner that is estrogen independent but is enhanced by estrogen. Interacts (via macro domain) with AR.</text>
</comment>
<comment type="subcellular location">
    <subcellularLocation>
        <location evidence="3">Nucleus</location>
    </subcellularLocation>
    <text evidence="3">Recruited to DNA lesions, probably via mono-APD-ribosylated proteins.</text>
</comment>
<comment type="similarity">
    <text evidence="6">Belongs to the MacroD-type family. MacroD1/2-like subfamily.</text>
</comment>
<keyword id="KW-0007">Acetylation</keyword>
<keyword id="KW-0378">Hydrolase</keyword>
<keyword id="KW-1017">Isopeptide bond</keyword>
<keyword id="KW-0539">Nucleus</keyword>
<keyword id="KW-1185">Reference proteome</keyword>
<keyword id="KW-0832">Ubl conjugation</keyword>
<dbReference type="EC" id="3.1.1.106" evidence="3"/>
<dbReference type="EC" id="3.2.2.-" evidence="3"/>
<dbReference type="EMBL" id="BC112879">
    <property type="protein sequence ID" value="AAI12880.1"/>
    <property type="molecule type" value="mRNA"/>
</dbReference>
<dbReference type="RefSeq" id="NP_001039974.1">
    <property type="nucleotide sequence ID" value="NM_001046509.1"/>
</dbReference>
<dbReference type="SMR" id="Q2KHU5"/>
<dbReference type="FunCoup" id="Q2KHU5">
    <property type="interactions" value="1026"/>
</dbReference>
<dbReference type="STRING" id="9913.ENSBTAP00000062380"/>
<dbReference type="PaxDb" id="9913-ENSBTAP00000022832"/>
<dbReference type="Ensembl" id="ENSBTAT00000022832.4">
    <property type="protein sequence ID" value="ENSBTAP00000022832.3"/>
    <property type="gene ID" value="ENSBTAG00000017181.5"/>
</dbReference>
<dbReference type="GeneID" id="613568"/>
<dbReference type="KEGG" id="bta:613568"/>
<dbReference type="CTD" id="28992"/>
<dbReference type="VEuPathDB" id="HostDB:ENSBTAG00000017181"/>
<dbReference type="VGNC" id="VGNC:56272">
    <property type="gene designation" value="MACROD1"/>
</dbReference>
<dbReference type="eggNOG" id="KOG2633">
    <property type="taxonomic scope" value="Eukaryota"/>
</dbReference>
<dbReference type="GeneTree" id="ENSGT00940000161450"/>
<dbReference type="HOGENOM" id="CLU_046550_4_1_1"/>
<dbReference type="InParanoid" id="Q2KHU5"/>
<dbReference type="OrthoDB" id="6133115at2759"/>
<dbReference type="TreeFam" id="TF341440"/>
<dbReference type="Proteomes" id="UP000009136">
    <property type="component" value="Chromosome 29"/>
</dbReference>
<dbReference type="Bgee" id="ENSBTAG00000017181">
    <property type="expression patterns" value="Expressed in longissimus thoracis muscle and 107 other cell types or tissues"/>
</dbReference>
<dbReference type="GO" id="GO:0005654">
    <property type="term" value="C:nucleoplasm"/>
    <property type="evidence" value="ECO:0000318"/>
    <property type="project" value="GO_Central"/>
</dbReference>
<dbReference type="GO" id="GO:0005634">
    <property type="term" value="C:nucleus"/>
    <property type="evidence" value="ECO:0000250"/>
    <property type="project" value="UniProtKB"/>
</dbReference>
<dbReference type="GO" id="GO:0140293">
    <property type="term" value="F:ADP-ribosylglutamate hydrolase activity"/>
    <property type="evidence" value="ECO:0000250"/>
    <property type="project" value="UniProtKB"/>
</dbReference>
<dbReference type="GO" id="GO:0016798">
    <property type="term" value="F:hydrolase activity, acting on glycosyl bonds"/>
    <property type="evidence" value="ECO:0000250"/>
    <property type="project" value="UniProtKB"/>
</dbReference>
<dbReference type="GO" id="GO:0061463">
    <property type="term" value="F:O-acetyl-ADP-ribose deacetylase activity"/>
    <property type="evidence" value="ECO:0007669"/>
    <property type="project" value="UniProtKB-EC"/>
</dbReference>
<dbReference type="GO" id="GO:0006974">
    <property type="term" value="P:DNA damage response"/>
    <property type="evidence" value="ECO:0000250"/>
    <property type="project" value="UniProtKB"/>
</dbReference>
<dbReference type="GO" id="GO:0140291">
    <property type="term" value="P:peptidyl-glutamate ADP-deribosylation"/>
    <property type="evidence" value="ECO:0000250"/>
    <property type="project" value="UniProtKB"/>
</dbReference>
<dbReference type="GO" id="GO:0051725">
    <property type="term" value="P:protein de-ADP-ribosylation"/>
    <property type="evidence" value="ECO:0000250"/>
    <property type="project" value="UniProtKB"/>
</dbReference>
<dbReference type="GO" id="GO:0042278">
    <property type="term" value="P:purine nucleoside metabolic process"/>
    <property type="evidence" value="ECO:0000318"/>
    <property type="project" value="GO_Central"/>
</dbReference>
<dbReference type="CDD" id="cd02908">
    <property type="entry name" value="Macro_OAADPr_deacetylase"/>
    <property type="match status" value="1"/>
</dbReference>
<dbReference type="FunFam" id="3.40.220.10:FF:000003">
    <property type="entry name" value="O-acetyl-ADP-ribose deacetylase MACROD2"/>
    <property type="match status" value="1"/>
</dbReference>
<dbReference type="Gene3D" id="3.40.220.10">
    <property type="entry name" value="Leucine Aminopeptidase, subunit E, domain 1"/>
    <property type="match status" value="1"/>
</dbReference>
<dbReference type="InterPro" id="IPR002589">
    <property type="entry name" value="Macro_dom"/>
</dbReference>
<dbReference type="InterPro" id="IPR043472">
    <property type="entry name" value="Macro_dom-like"/>
</dbReference>
<dbReference type="NCBIfam" id="NF001664">
    <property type="entry name" value="PRK00431.1-6"/>
    <property type="match status" value="1"/>
</dbReference>
<dbReference type="PANTHER" id="PTHR11106:SF93">
    <property type="entry name" value="ADP-RIBOSE GLYCOHYDROLASE MACROD1"/>
    <property type="match status" value="1"/>
</dbReference>
<dbReference type="PANTHER" id="PTHR11106">
    <property type="entry name" value="GANGLIOSIDE INDUCED DIFFERENTIATION ASSOCIATED PROTEIN 2-RELATED"/>
    <property type="match status" value="1"/>
</dbReference>
<dbReference type="Pfam" id="PF01661">
    <property type="entry name" value="Macro"/>
    <property type="match status" value="1"/>
</dbReference>
<dbReference type="SMART" id="SM00506">
    <property type="entry name" value="A1pp"/>
    <property type="match status" value="1"/>
</dbReference>
<dbReference type="SUPFAM" id="SSF52949">
    <property type="entry name" value="Macro domain-like"/>
    <property type="match status" value="1"/>
</dbReference>
<dbReference type="PROSITE" id="PS51154">
    <property type="entry name" value="MACRO"/>
    <property type="match status" value="1"/>
</dbReference>
<accession>Q2KHU5</accession>
<feature type="chain" id="PRO_0000300460" description="ADP-ribose glycohydrolase MACROD1">
    <location>
        <begin position="1"/>
        <end position="325"/>
    </location>
</feature>
<feature type="domain" description="Macro" evidence="4">
    <location>
        <begin position="141"/>
        <end position="322"/>
    </location>
</feature>
<feature type="region of interest" description="Disordered" evidence="5">
    <location>
        <begin position="21"/>
        <end position="55"/>
    </location>
</feature>
<feature type="binding site" evidence="1">
    <location>
        <begin position="159"/>
        <end position="161"/>
    </location>
    <ligand>
        <name>substrate</name>
    </ligand>
</feature>
<feature type="binding site" evidence="1">
    <location>
        <begin position="172"/>
        <end position="174"/>
    </location>
    <ligand>
        <name>substrate</name>
    </ligand>
</feature>
<feature type="binding site" evidence="1">
    <location>
        <begin position="179"/>
        <end position="184"/>
    </location>
    <ligand>
        <name>substrate</name>
    </ligand>
</feature>
<feature type="binding site" evidence="1">
    <location>
        <begin position="267"/>
        <end position="273"/>
    </location>
    <ligand>
        <name>substrate</name>
    </ligand>
</feature>
<feature type="binding site" evidence="1">
    <location>
        <position position="306"/>
    </location>
    <ligand>
        <name>substrate</name>
    </ligand>
</feature>
<feature type="modified residue" description="N6-succinyllysine" evidence="2">
    <location>
        <position position="96"/>
    </location>
</feature>
<feature type="modified residue" description="N6-succinyllysine" evidence="2">
    <location>
        <position position="103"/>
    </location>
</feature>
<feature type="modified residue" description="N6-succinyllysine" evidence="2">
    <location>
        <position position="129"/>
    </location>
</feature>
<feature type="modified residue" description="N6-acetyllysine" evidence="2">
    <location>
        <position position="163"/>
    </location>
</feature>
<feature type="cross-link" description="Glycyl lysine isopeptide (Lys-Gly) (interchain with G-Cter in SUMO2)" evidence="3">
    <location>
        <position position="138"/>
    </location>
</feature>
<organism>
    <name type="scientific">Bos taurus</name>
    <name type="common">Bovine</name>
    <dbReference type="NCBI Taxonomy" id="9913"/>
    <lineage>
        <taxon>Eukaryota</taxon>
        <taxon>Metazoa</taxon>
        <taxon>Chordata</taxon>
        <taxon>Craniata</taxon>
        <taxon>Vertebrata</taxon>
        <taxon>Euteleostomi</taxon>
        <taxon>Mammalia</taxon>
        <taxon>Eutheria</taxon>
        <taxon>Laurasiatheria</taxon>
        <taxon>Artiodactyla</taxon>
        <taxon>Ruminantia</taxon>
        <taxon>Pecora</taxon>
        <taxon>Bovidae</taxon>
        <taxon>Bovinae</taxon>
        <taxon>Bos</taxon>
    </lineage>
</organism>
<proteinExistence type="evidence at transcript level"/>
<gene>
    <name type="primary">MACROD1</name>
    <name type="synonym">LRP16</name>
</gene>
<protein>
    <recommendedName>
        <fullName evidence="6">ADP-ribose glycohydrolase MACROD1</fullName>
    </recommendedName>
    <alternativeName>
        <fullName>MACRO domain-containing protein 1</fullName>
    </alternativeName>
    <alternativeName>
        <fullName>O-acetyl-ADP-ribose deacetylase MACROD1</fullName>
        <ecNumber evidence="3">3.1.1.106</ecNumber>
    </alternativeName>
    <alternativeName>
        <fullName>Protein LRP16</fullName>
    </alternativeName>
    <alternativeName>
        <fullName evidence="6">[Protein ADP-ribosylaspartate] hydrolase MACROD1</fullName>
        <ecNumber evidence="3">3.2.2.-</ecNumber>
    </alternativeName>
    <alternativeName>
        <fullName evidence="6">[Protein ADP-ribosylglutamate] hydrolase MACROD1</fullName>
        <ecNumber evidence="3">3.2.2.-</ecNumber>
    </alternativeName>
</protein>